<accession>Q2UF71</accession>
<name>CHSY_ASPOR</name>
<organism>
    <name type="scientific">Aspergillus oryzae (strain ATCC 42149 / RIB 40)</name>
    <name type="common">Yellow koji mold</name>
    <dbReference type="NCBI Taxonomy" id="510516"/>
    <lineage>
        <taxon>Eukaryota</taxon>
        <taxon>Fungi</taxon>
        <taxon>Dikarya</taxon>
        <taxon>Ascomycota</taxon>
        <taxon>Pezizomycotina</taxon>
        <taxon>Eurotiomycetes</taxon>
        <taxon>Eurotiomycetidae</taxon>
        <taxon>Eurotiales</taxon>
        <taxon>Aspergillaceae</taxon>
        <taxon>Aspergillus</taxon>
        <taxon>Aspergillus subgen. Circumdati</taxon>
    </lineage>
</organism>
<reference key="1">
    <citation type="journal article" date="2005" name="Nature">
        <title>Genome sequencing and analysis of Aspergillus oryzae.</title>
        <authorList>
            <person name="Machida M."/>
            <person name="Asai K."/>
            <person name="Sano M."/>
            <person name="Tanaka T."/>
            <person name="Kumagai T."/>
            <person name="Terai G."/>
            <person name="Kusumoto K."/>
            <person name="Arima T."/>
            <person name="Akita O."/>
            <person name="Kashiwagi Y."/>
            <person name="Abe K."/>
            <person name="Gomi K."/>
            <person name="Horiuchi H."/>
            <person name="Kitamoto K."/>
            <person name="Kobayashi T."/>
            <person name="Takeuchi M."/>
            <person name="Denning D.W."/>
            <person name="Galagan J.E."/>
            <person name="Nierman W.C."/>
            <person name="Yu J."/>
            <person name="Archer D.B."/>
            <person name="Bennett J.W."/>
            <person name="Bhatnagar D."/>
            <person name="Cleveland T.E."/>
            <person name="Fedorova N.D."/>
            <person name="Gotoh O."/>
            <person name="Horikawa H."/>
            <person name="Hosoyama A."/>
            <person name="Ichinomiya M."/>
            <person name="Igarashi R."/>
            <person name="Iwashita K."/>
            <person name="Juvvadi P.R."/>
            <person name="Kato M."/>
            <person name="Kato Y."/>
            <person name="Kin T."/>
            <person name="Kokubun A."/>
            <person name="Maeda H."/>
            <person name="Maeyama N."/>
            <person name="Maruyama J."/>
            <person name="Nagasaki H."/>
            <person name="Nakajima T."/>
            <person name="Oda K."/>
            <person name="Okada K."/>
            <person name="Paulsen I."/>
            <person name="Sakamoto K."/>
            <person name="Sawano T."/>
            <person name="Takahashi M."/>
            <person name="Takase K."/>
            <person name="Terabayashi Y."/>
            <person name="Wortman J.R."/>
            <person name="Yamada O."/>
            <person name="Yamagata Y."/>
            <person name="Anazawa H."/>
            <person name="Hata Y."/>
            <person name="Koide Y."/>
            <person name="Komori T."/>
            <person name="Koyama Y."/>
            <person name="Minetoki T."/>
            <person name="Suharnan S."/>
            <person name="Tanaka A."/>
            <person name="Isono K."/>
            <person name="Kuhara S."/>
            <person name="Ogasawara N."/>
            <person name="Kikuchi H."/>
        </authorList>
    </citation>
    <scope>NUCLEOTIDE SEQUENCE [LARGE SCALE GENOMIC DNA]</scope>
    <source>
        <strain>ATCC 42149 / RIB 40</strain>
    </source>
</reference>
<reference key="2">
    <citation type="journal article" date="2002" name="Curr. Genet.">
        <title>chsZ, a gene for a novel class of chitin synthase from Aspergillus oryzae.</title>
        <authorList>
            <person name="Chigira Y."/>
            <person name="Abe K."/>
            <person name="Gomi K."/>
            <person name="Nakajima T."/>
        </authorList>
    </citation>
    <scope>IDENTIFICATION</scope>
    <scope>FUNCTION</scope>
    <scope>INDUCTION</scope>
</reference>
<comment type="function">
    <text evidence="8 11">Polymerizes chitin, a structural polymer of the cell wall and septum, by transferring the sugar moiety of UDP-GlcNAc to the non-reducing end of the growing chitin polymer (Probable). Specifically involved in hyphal elongation and new cell wall formation (PubMed:12172967).</text>
</comment>
<comment type="catalytic activity">
    <reaction evidence="11">
        <text>[(1-&gt;4)-N-acetyl-beta-D-glucosaminyl](n) + UDP-N-acetyl-alpha-D-glucosamine = [(1-&gt;4)-N-acetyl-beta-D-glucosaminyl](n+1) + UDP + H(+)</text>
        <dbReference type="Rhea" id="RHEA:16637"/>
        <dbReference type="Rhea" id="RHEA-COMP:9593"/>
        <dbReference type="Rhea" id="RHEA-COMP:9595"/>
        <dbReference type="ChEBI" id="CHEBI:15378"/>
        <dbReference type="ChEBI" id="CHEBI:17029"/>
        <dbReference type="ChEBI" id="CHEBI:57705"/>
        <dbReference type="ChEBI" id="CHEBI:58223"/>
        <dbReference type="EC" id="2.4.1.16"/>
    </reaction>
    <physiologicalReaction direction="left-to-right" evidence="11">
        <dbReference type="Rhea" id="RHEA:16638"/>
    </physiologicalReaction>
</comment>
<comment type="subcellular location">
    <subcellularLocation>
        <location evidence="10">Cell membrane</location>
        <topology evidence="2">Multi-pass membrane protein</topology>
    </subcellularLocation>
    <subcellularLocation>
        <location evidence="1">Cell septum</location>
    </subcellularLocation>
    <subcellularLocation>
        <location evidence="1">Cell tip</location>
    </subcellularLocation>
</comment>
<comment type="induction">
    <text evidence="8">Expression is induced in YPAD liquid condition but not in the solid phase condition.</text>
</comment>
<comment type="domain">
    <text evidence="1">The N-terminal myosin motor-like domain (MMD) does not seem to have motor activity but is indispensable for polarized cell wall synthesis via binding to actin that ensures the proper localization to the hyphal tips and septation sites near actin structures.</text>
</comment>
<comment type="similarity">
    <text evidence="10">In the N-terminal section; belongs to the TRAFAC class myosin-kinesin ATPase superfamily. Myosin family.</text>
</comment>
<comment type="similarity">
    <text evidence="10">In the C-terminal section; belongs to the chitin synthase family. Class V subfamily.</text>
</comment>
<sequence length="1857" mass="206251">MVGPSPAGTVPSHAQSSLPSLPAHLQSDTHLTAHLASRFHVGLPTARLSSQALISLNTYTSSSKGPDGGKEGSAMGEAEDLARRAFTRLGARGENQAIVFLGESGAGKTTLRAHVLSSFLSFSSTPLSSKLSYASFIFDTLTTTKSLTTLTASKAGLFLELQYDGSSSVNPTLIGGKIIDHRLERSRIASVPTGERSFHVLYYLLAGTSAAEKSHLGFDNSIHVSTNAGKLSSASIGHKRWRYLGHPTQLKVGINDAEGFQHFKTALRKLEFPRSEIAEICQILAVILHIGQLDFASGQATLTSAEESGGYSHEGGETVTVVKNKDVLSSVAAFLGLGVDELENSFSYRTKTIHRERVTVMLDPKGARQNADELARTIYSLLVAYILENVNQRICAAEDSVANTVSIVDFPGFSQACSTGSTLDQLLSNAATESLYNFCLQSFFDRKADMLEREEVVVPATSYFDNTDAVRGLLKHGNGLLSILDDQTRRGRTEAQFAESLKKRFENKNPAIVVGSSGSTHGTGYVSQQARSAFTVKHFAGEVDYSISGLLEENGEVISGDLMNLMKSTRSDFVRELFGQEALQTVTHPKEKTAIMQAQVSSKPLRMPSMARRKASPASRLTFDAPTAEEPEDNESYGGSTAKSSGRRKSAMSMTGMQGAAGQFLSSLEIVNKCLSSPSLNPYFIFCLKPNDRRIANQFDSKCVRAQVQTFGIAEISQRLRNADFSVFLPFEEFLGLAEVGNVVVGSDKEKSEVVLDEKRWPGNEARVGSTGVFLSERCWADLAKVGERVVPVYHADGSDEGGDGLLHPRTAGYGDSKVRLLNPADQSLGNFIYGDESKQGYFGSRDIDGRSDTGGSGLNSGDMFHNLETREQMLEKGNEKKMEEVDEVPVSGSRKRWMAIVWLLTFYIPDFAIRLFGRMKRKDVRTAWREKFAINLIIWFSCAVAIFFIVAFPGLVCPTQHVYSAAELESHNGKNGHDSYIAIRGVVFDLDKFMPRHYPDIVPQSSLKKYAGMDATGLFPVQVSALCQGKDGSIDPTVLLDYTPTNISGSATTISTGDLNAKYHDFRYYTNDSRPDWFAEQMKELRATYLKGYIGYTPQYISTLAKKSQNIGSIDGKVYDLTTYISGGRRVAAPTGKEVPANVDREFMDPLVVSLFQDLPGQDLSKHWEQLQIDAGMRDRMQMCLDNLFFVGKVDTRNSAQCQFARYFILAISILICAVVIFKFAAALQFGKKNVPENLDKFIICQVPAYTEDEESLRRAMDSMARMQYDDKRKLLVVICDGMIIGQGNDRPTPRIVLDILGVPESVDPEPLSFESLGEGMKQHNMGKIYSGLYEVQGHIVPFLVVVKVGKPSEVSRPGNRGKRDSQMVLMRFLNRVHYNLPMSPMELEMYHQIRNIIGVNPTFYEFILQVDADTVVAPDSGTRFVASCLADTRIIGICGETGLTNAKHSAVTMIQVYEYFISHNLIKAFESLFGSVTCLPGCFTMYRIRSAETAKPLFVSKEVVEAYSEIRVDTLHMKNLLHLGEDRYLTTLLLKHHPSFKTKFLFAAKAWTIAPESFSVFLSQRRRWINSTVHNLIELIPLQQLCGFCCFSMRFIVFVDLLSTCIQPVSLAYIIYLIVWLARDSSTIPWTSFVLIAAIYGLQALIFIFRRKWEMIGWMIVYLLAMPIFSVALPFYSFWHMDDFSWGNTRVITGEKGRKVVISDEGKFDPASIPKKRWEEYQAELWEAQTSRDDRSEVSGFSYGTKSYHPAQSEYGFPGARPMSQFDLPRYGSRMSLAPSEMMSRHMDMEMEDLSHLPSDDAILAEIREILRTADLMTVTKKSIKQELERRFGVNLDAKRPYINSATEAVLSGAL</sequence>
<protein>
    <recommendedName>
        <fullName evidence="9">Chitin synthase Y</fullName>
        <ecNumber evidence="11">2.4.1.16</ecNumber>
    </recommendedName>
    <alternativeName>
        <fullName evidence="10">Chitin-UDP acetyl-glucosaminyl transferase Y</fullName>
    </alternativeName>
    <alternativeName>
        <fullName evidence="9">Class-V chitin synthase Y</fullName>
    </alternativeName>
</protein>
<dbReference type="EC" id="2.4.1.16" evidence="11"/>
<dbReference type="EMBL" id="AP007159">
    <property type="protein sequence ID" value="BAE59794.1"/>
    <property type="molecule type" value="Genomic_DNA"/>
</dbReference>
<dbReference type="RefSeq" id="XP_001821796.1">
    <property type="nucleotide sequence ID" value="XM_001821744.2"/>
</dbReference>
<dbReference type="SMR" id="Q2UF71"/>
<dbReference type="STRING" id="510516.Q2UF71"/>
<dbReference type="CAZy" id="GT2">
    <property type="family name" value="Glycosyltransferase Family 2"/>
</dbReference>
<dbReference type="EnsemblFungi" id="BAE59794">
    <property type="protein sequence ID" value="BAE59794"/>
    <property type="gene ID" value="AO090026000323"/>
</dbReference>
<dbReference type="GeneID" id="5993824"/>
<dbReference type="KEGG" id="aor:AO090026000323"/>
<dbReference type="VEuPathDB" id="FungiDB:AO090026000323"/>
<dbReference type="HOGENOM" id="CLU_000192_0_2_1"/>
<dbReference type="OMA" id="LEMHHQI"/>
<dbReference type="OrthoDB" id="47346at5052"/>
<dbReference type="Proteomes" id="UP000006564">
    <property type="component" value="Chromosome 3"/>
</dbReference>
<dbReference type="GO" id="GO:0030428">
    <property type="term" value="C:cell septum"/>
    <property type="evidence" value="ECO:0007669"/>
    <property type="project" value="UniProtKB-SubCell"/>
</dbReference>
<dbReference type="GO" id="GO:0051286">
    <property type="term" value="C:cell tip"/>
    <property type="evidence" value="ECO:0007669"/>
    <property type="project" value="UniProtKB-SubCell"/>
</dbReference>
<dbReference type="GO" id="GO:0016459">
    <property type="term" value="C:myosin complex"/>
    <property type="evidence" value="ECO:0007669"/>
    <property type="project" value="UniProtKB-KW"/>
</dbReference>
<dbReference type="GO" id="GO:0005886">
    <property type="term" value="C:plasma membrane"/>
    <property type="evidence" value="ECO:0007669"/>
    <property type="project" value="UniProtKB-SubCell"/>
</dbReference>
<dbReference type="GO" id="GO:0003779">
    <property type="term" value="F:actin binding"/>
    <property type="evidence" value="ECO:0007669"/>
    <property type="project" value="UniProtKB-KW"/>
</dbReference>
<dbReference type="GO" id="GO:0005524">
    <property type="term" value="F:ATP binding"/>
    <property type="evidence" value="ECO:0007669"/>
    <property type="project" value="UniProtKB-KW"/>
</dbReference>
<dbReference type="GO" id="GO:0004100">
    <property type="term" value="F:chitin synthase activity"/>
    <property type="evidence" value="ECO:0007669"/>
    <property type="project" value="UniProtKB-EC"/>
</dbReference>
<dbReference type="GO" id="GO:0003774">
    <property type="term" value="F:cytoskeletal motor activity"/>
    <property type="evidence" value="ECO:0007669"/>
    <property type="project" value="InterPro"/>
</dbReference>
<dbReference type="GO" id="GO:0006031">
    <property type="term" value="P:chitin biosynthetic process"/>
    <property type="evidence" value="ECO:0007669"/>
    <property type="project" value="TreeGrafter"/>
</dbReference>
<dbReference type="GO" id="GO:0031505">
    <property type="term" value="P:fungal-type cell wall organization"/>
    <property type="evidence" value="ECO:0007669"/>
    <property type="project" value="TreeGrafter"/>
</dbReference>
<dbReference type="CDD" id="cd14879">
    <property type="entry name" value="MYSc_Myo17"/>
    <property type="match status" value="1"/>
</dbReference>
<dbReference type="FunFam" id="1.10.10.60:FF:000337">
    <property type="entry name" value="Chitin synthase 8"/>
    <property type="match status" value="1"/>
</dbReference>
<dbReference type="FunFam" id="1.10.10.820:FF:000012">
    <property type="entry name" value="Chitin synthase ChsE"/>
    <property type="match status" value="1"/>
</dbReference>
<dbReference type="FunFam" id="1.20.58.530:FF:000017">
    <property type="entry name" value="Chitin synthase ChsE"/>
    <property type="match status" value="1"/>
</dbReference>
<dbReference type="FunFam" id="3.10.120.10:FF:000019">
    <property type="entry name" value="Chitin synthase ChsE"/>
    <property type="match status" value="1"/>
</dbReference>
<dbReference type="FunFam" id="3.40.850.10:FF:000055">
    <property type="entry name" value="Chitin synthase ChsE"/>
    <property type="match status" value="1"/>
</dbReference>
<dbReference type="Gene3D" id="1.10.10.820">
    <property type="match status" value="1"/>
</dbReference>
<dbReference type="Gene3D" id="1.20.58.530">
    <property type="match status" value="1"/>
</dbReference>
<dbReference type="Gene3D" id="3.10.120.10">
    <property type="entry name" value="Cytochrome b5-like heme/steroid binding domain"/>
    <property type="match status" value="1"/>
</dbReference>
<dbReference type="Gene3D" id="1.10.10.60">
    <property type="entry name" value="Homeodomain-like"/>
    <property type="match status" value="1"/>
</dbReference>
<dbReference type="Gene3D" id="3.40.850.10">
    <property type="entry name" value="Kinesin motor domain"/>
    <property type="match status" value="1"/>
</dbReference>
<dbReference type="Gene3D" id="1.20.120.720">
    <property type="entry name" value="Myosin VI head, motor domain, U50 subdomain"/>
    <property type="match status" value="1"/>
</dbReference>
<dbReference type="InterPro" id="IPR004835">
    <property type="entry name" value="Chitin_synth"/>
</dbReference>
<dbReference type="InterPro" id="IPR001199">
    <property type="entry name" value="Cyt_B5-like_heme/steroid-bd"/>
</dbReference>
<dbReference type="InterPro" id="IPR036400">
    <property type="entry name" value="Cyt_B5-like_heme/steroid_sf"/>
</dbReference>
<dbReference type="InterPro" id="IPR014876">
    <property type="entry name" value="DEK_C"/>
</dbReference>
<dbReference type="InterPro" id="IPR036961">
    <property type="entry name" value="Kinesin_motor_dom_sf"/>
</dbReference>
<dbReference type="InterPro" id="IPR001609">
    <property type="entry name" value="Myosin_head_motor_dom-like"/>
</dbReference>
<dbReference type="InterPro" id="IPR036037">
    <property type="entry name" value="MYSc_Myo17"/>
</dbReference>
<dbReference type="InterPro" id="IPR029044">
    <property type="entry name" value="Nucleotide-diphossugar_trans"/>
</dbReference>
<dbReference type="InterPro" id="IPR027417">
    <property type="entry name" value="P-loop_NTPase"/>
</dbReference>
<dbReference type="PANTHER" id="PTHR22914">
    <property type="entry name" value="CHITIN SYNTHASE"/>
    <property type="match status" value="1"/>
</dbReference>
<dbReference type="PANTHER" id="PTHR22914:SF45">
    <property type="entry name" value="CHITIN SYNTHASE"/>
    <property type="match status" value="1"/>
</dbReference>
<dbReference type="Pfam" id="PF03142">
    <property type="entry name" value="Chitin_synth_2"/>
    <property type="match status" value="1"/>
</dbReference>
<dbReference type="Pfam" id="PF00173">
    <property type="entry name" value="Cyt-b5"/>
    <property type="match status" value="1"/>
</dbReference>
<dbReference type="Pfam" id="PF08766">
    <property type="entry name" value="DEK_C"/>
    <property type="match status" value="1"/>
</dbReference>
<dbReference type="Pfam" id="PF00063">
    <property type="entry name" value="Myosin_head"/>
    <property type="match status" value="1"/>
</dbReference>
<dbReference type="SMART" id="SM01117">
    <property type="entry name" value="Cyt-b5"/>
    <property type="match status" value="2"/>
</dbReference>
<dbReference type="SMART" id="SM00242">
    <property type="entry name" value="MYSc"/>
    <property type="match status" value="1"/>
</dbReference>
<dbReference type="SUPFAM" id="SSF55856">
    <property type="entry name" value="Cytochrome b5-like heme/steroid binding domain"/>
    <property type="match status" value="1"/>
</dbReference>
<dbReference type="SUPFAM" id="SSF109715">
    <property type="entry name" value="DEK C-terminal domain"/>
    <property type="match status" value="1"/>
</dbReference>
<dbReference type="SUPFAM" id="SSF53448">
    <property type="entry name" value="Nucleotide-diphospho-sugar transferases"/>
    <property type="match status" value="1"/>
</dbReference>
<dbReference type="SUPFAM" id="SSF52540">
    <property type="entry name" value="P-loop containing nucleoside triphosphate hydrolases"/>
    <property type="match status" value="1"/>
</dbReference>
<dbReference type="PROSITE" id="PS50255">
    <property type="entry name" value="CYTOCHROME_B5_2"/>
    <property type="match status" value="1"/>
</dbReference>
<dbReference type="PROSITE" id="PS51998">
    <property type="entry name" value="DEK_C"/>
    <property type="match status" value="1"/>
</dbReference>
<dbReference type="PROSITE" id="PS51456">
    <property type="entry name" value="MYOSIN_MOTOR"/>
    <property type="match status" value="1"/>
</dbReference>
<evidence type="ECO:0000250" key="1">
    <source>
        <dbReference type="UniProtKB" id="G5EB74"/>
    </source>
</evidence>
<evidence type="ECO:0000255" key="2"/>
<evidence type="ECO:0000255" key="3">
    <source>
        <dbReference type="PROSITE-ProRule" id="PRU00279"/>
    </source>
</evidence>
<evidence type="ECO:0000255" key="4">
    <source>
        <dbReference type="PROSITE-ProRule" id="PRU00498"/>
    </source>
</evidence>
<evidence type="ECO:0000255" key="5">
    <source>
        <dbReference type="PROSITE-ProRule" id="PRU00782"/>
    </source>
</evidence>
<evidence type="ECO:0000255" key="6">
    <source>
        <dbReference type="PROSITE-ProRule" id="PRU01342"/>
    </source>
</evidence>
<evidence type="ECO:0000256" key="7">
    <source>
        <dbReference type="SAM" id="MobiDB-lite"/>
    </source>
</evidence>
<evidence type="ECO:0000269" key="8">
    <source>
    </source>
</evidence>
<evidence type="ECO:0000303" key="9">
    <source>
    </source>
</evidence>
<evidence type="ECO:0000305" key="10"/>
<evidence type="ECO:0000305" key="11">
    <source>
    </source>
</evidence>
<keyword id="KW-0009">Actin-binding</keyword>
<keyword id="KW-0067">ATP-binding</keyword>
<keyword id="KW-1003">Cell membrane</keyword>
<keyword id="KW-0325">Glycoprotein</keyword>
<keyword id="KW-0328">Glycosyltransferase</keyword>
<keyword id="KW-0472">Membrane</keyword>
<keyword id="KW-0505">Motor protein</keyword>
<keyword id="KW-0518">Myosin</keyword>
<keyword id="KW-0547">Nucleotide-binding</keyword>
<keyword id="KW-1185">Reference proteome</keyword>
<keyword id="KW-0808">Transferase</keyword>
<keyword id="KW-0812">Transmembrane</keyword>
<keyword id="KW-1133">Transmembrane helix</keyword>
<feature type="chain" id="PRO_0000460873" description="Chitin synthase Y">
    <location>
        <begin position="1"/>
        <end position="1857"/>
    </location>
</feature>
<feature type="transmembrane region" description="Helical" evidence="2">
    <location>
        <begin position="898"/>
        <end position="918"/>
    </location>
</feature>
<feature type="transmembrane region" description="Helical" evidence="2">
    <location>
        <begin position="937"/>
        <end position="957"/>
    </location>
</feature>
<feature type="transmembrane region" description="Helical" evidence="2">
    <location>
        <begin position="1209"/>
        <end position="1229"/>
    </location>
</feature>
<feature type="transmembrane region" description="Helical" evidence="2">
    <location>
        <begin position="1603"/>
        <end position="1623"/>
    </location>
</feature>
<feature type="transmembrane region" description="Helical" evidence="2">
    <location>
        <begin position="1630"/>
        <end position="1650"/>
    </location>
</feature>
<feature type="transmembrane region" description="Helical" evidence="2">
    <location>
        <begin position="1657"/>
        <end position="1677"/>
    </location>
</feature>
<feature type="domain" description="Myosin motor" evidence="5">
    <location>
        <begin position="1"/>
        <end position="788"/>
    </location>
</feature>
<feature type="domain" description="Cytochrome b5 heme-binding" evidence="3">
    <location>
        <begin position="961"/>
        <end position="1020"/>
    </location>
</feature>
<feature type="domain" description="DEK-C" evidence="6">
    <location>
        <begin position="1799"/>
        <end position="1854"/>
    </location>
</feature>
<feature type="region of interest" description="Disordered" evidence="7">
    <location>
        <begin position="1"/>
        <end position="22"/>
    </location>
</feature>
<feature type="region of interest" description="Disordered" evidence="7">
    <location>
        <begin position="601"/>
        <end position="653"/>
    </location>
</feature>
<feature type="region of interest" description="Actin-binding" evidence="5">
    <location>
        <begin position="668"/>
        <end position="692"/>
    </location>
</feature>
<feature type="binding site" evidence="5">
    <location>
        <begin position="102"/>
        <end position="109"/>
    </location>
    <ligand>
        <name>ATP</name>
        <dbReference type="ChEBI" id="CHEBI:30616"/>
    </ligand>
</feature>
<feature type="glycosylation site" description="N-linked (GlcNAc...) asparagine" evidence="4">
    <location>
        <position position="634"/>
    </location>
</feature>
<feature type="glycosylation site" description="N-linked (GlcNAc...) asparagine" evidence="4">
    <location>
        <position position="1047"/>
    </location>
</feature>
<feature type="glycosylation site" description="N-linked (GlcNAc...) asparagine" evidence="4">
    <location>
        <position position="1072"/>
    </location>
</feature>
<feature type="glycosylation site" description="N-linked (GlcNAc...) asparagine" evidence="4">
    <location>
        <position position="1572"/>
    </location>
</feature>
<proteinExistence type="evidence at transcript level"/>
<gene>
    <name evidence="9" type="primary">chsY</name>
    <name type="ORF">AO090026000323</name>
</gene>